<sequence length="115" mass="13180">MKIALVLLSLLALTLAESNISPPVVKVYTAEPVDFGKTNEVICYVYNYHPPRLEMRLEKNGVEIPDCKQTDPSFQHNWKYYTTKSTHVHIDKGDKVECVVSHNGNPSKKYRLDIF</sequence>
<proteinExistence type="evidence at protein level"/>
<gene>
    <name type="primary">b2m</name>
</gene>
<evidence type="ECO:0000250" key="1"/>
<evidence type="ECO:0000255" key="2"/>
<evidence type="ECO:0000305" key="3"/>
<evidence type="ECO:0007829" key="4">
    <source>
        <dbReference type="PDB" id="6A2B"/>
    </source>
</evidence>
<protein>
    <recommendedName>
        <fullName>Beta-2-microglobulin</fullName>
    </recommendedName>
</protein>
<accession>Q9IA97</accession>
<comment type="function">
    <text evidence="1">Component of the class I major histocompatibility complex (MHC). Involved in the presentation of peptide antigens to the immune system (By similarity).</text>
</comment>
<comment type="subunit">
    <text evidence="1">Heterodimer of an alpha chain and a beta chain. Beta-2-microglobulin is the beta-chain of major histocompatibility complex class I molecules (By similarity).</text>
</comment>
<comment type="subcellular location">
    <subcellularLocation>
        <location evidence="1">Secreted</location>
    </subcellularLocation>
</comment>
<comment type="similarity">
    <text evidence="3">Belongs to the beta-2-microglobulin family.</text>
</comment>
<dbReference type="EMBL" id="AF217962">
    <property type="protein sequence ID" value="AAF37230.2"/>
    <property type="molecule type" value="mRNA"/>
</dbReference>
<dbReference type="RefSeq" id="NP_001082000.1">
    <property type="nucleotide sequence ID" value="NM_001088531.1"/>
</dbReference>
<dbReference type="PDB" id="6A2B">
    <property type="method" value="X-ray"/>
    <property type="resolution" value="2.80 A"/>
    <property type="chains" value="B=20-113"/>
</dbReference>
<dbReference type="PDBsum" id="6A2B"/>
<dbReference type="SMR" id="Q9IA97"/>
<dbReference type="GeneID" id="398171"/>
<dbReference type="KEGG" id="xla:398171"/>
<dbReference type="AGR" id="Xenbase:XB-GENE-6251920"/>
<dbReference type="CTD" id="398171"/>
<dbReference type="Xenbase" id="XB-GENE-6251920">
    <property type="gene designation" value="b2m.S"/>
</dbReference>
<dbReference type="OrthoDB" id="9949628at2759"/>
<dbReference type="Proteomes" id="UP000186698">
    <property type="component" value="Chromosome 9_10S"/>
</dbReference>
<dbReference type="Bgee" id="398171">
    <property type="expression patterns" value="Expressed in spleen and 19 other cell types or tissues"/>
</dbReference>
<dbReference type="GO" id="GO:0005576">
    <property type="term" value="C:extracellular region"/>
    <property type="evidence" value="ECO:0007669"/>
    <property type="project" value="UniProtKB-SubCell"/>
</dbReference>
<dbReference type="GO" id="GO:0042612">
    <property type="term" value="C:MHC class I protein complex"/>
    <property type="evidence" value="ECO:0007669"/>
    <property type="project" value="UniProtKB-KW"/>
</dbReference>
<dbReference type="GO" id="GO:0002474">
    <property type="term" value="P:antigen processing and presentation of peptide antigen via MHC class I"/>
    <property type="evidence" value="ECO:0007669"/>
    <property type="project" value="UniProtKB-KW"/>
</dbReference>
<dbReference type="GO" id="GO:0006955">
    <property type="term" value="P:immune response"/>
    <property type="evidence" value="ECO:0007669"/>
    <property type="project" value="InterPro"/>
</dbReference>
<dbReference type="CDD" id="cd05770">
    <property type="entry name" value="IgC1_beta2m"/>
    <property type="match status" value="1"/>
</dbReference>
<dbReference type="Gene3D" id="2.60.40.10">
    <property type="entry name" value="Immunoglobulins"/>
    <property type="match status" value="1"/>
</dbReference>
<dbReference type="InterPro" id="IPR015707">
    <property type="entry name" value="B2Microglobulin"/>
</dbReference>
<dbReference type="InterPro" id="IPR007110">
    <property type="entry name" value="Ig-like_dom"/>
</dbReference>
<dbReference type="InterPro" id="IPR036179">
    <property type="entry name" value="Ig-like_dom_sf"/>
</dbReference>
<dbReference type="InterPro" id="IPR013783">
    <property type="entry name" value="Ig-like_fold"/>
</dbReference>
<dbReference type="InterPro" id="IPR003597">
    <property type="entry name" value="Ig_C1-set"/>
</dbReference>
<dbReference type="InterPro" id="IPR050160">
    <property type="entry name" value="MHC/Immunoglobulin"/>
</dbReference>
<dbReference type="PANTHER" id="PTHR19944:SF62">
    <property type="entry name" value="BETA-2-MICROGLOBULIN"/>
    <property type="match status" value="1"/>
</dbReference>
<dbReference type="PANTHER" id="PTHR19944">
    <property type="entry name" value="MHC CLASS II-RELATED"/>
    <property type="match status" value="1"/>
</dbReference>
<dbReference type="Pfam" id="PF07654">
    <property type="entry name" value="C1-set"/>
    <property type="match status" value="1"/>
</dbReference>
<dbReference type="SMART" id="SM00407">
    <property type="entry name" value="IGc1"/>
    <property type="match status" value="1"/>
</dbReference>
<dbReference type="SUPFAM" id="SSF48726">
    <property type="entry name" value="Immunoglobulin"/>
    <property type="match status" value="1"/>
</dbReference>
<dbReference type="PROSITE" id="PS50835">
    <property type="entry name" value="IG_LIKE"/>
    <property type="match status" value="1"/>
</dbReference>
<name>B2MG_XENLA</name>
<keyword id="KW-0002">3D-structure</keyword>
<keyword id="KW-0391">Immunity</keyword>
<keyword id="KW-0393">Immunoglobulin domain</keyword>
<keyword id="KW-0490">MHC I</keyword>
<keyword id="KW-1185">Reference proteome</keyword>
<keyword id="KW-0964">Secreted</keyword>
<keyword id="KW-0732">Signal</keyword>
<feature type="signal peptide" evidence="2">
    <location>
        <begin position="1"/>
        <end position="16"/>
    </location>
</feature>
<feature type="chain" id="PRO_0000018812" description="Beta-2-microglobulin">
    <location>
        <begin position="17"/>
        <end position="115"/>
    </location>
</feature>
<feature type="domain" description="Ig-like C1-type">
    <location>
        <begin position="22"/>
        <end position="113"/>
    </location>
</feature>
<feature type="strand" evidence="4">
    <location>
        <begin position="24"/>
        <end position="31"/>
    </location>
</feature>
<feature type="strand" evidence="4">
    <location>
        <begin position="37"/>
        <end position="51"/>
    </location>
</feature>
<feature type="strand" evidence="4">
    <location>
        <begin position="53"/>
        <end position="59"/>
    </location>
</feature>
<feature type="strand" evidence="4">
    <location>
        <begin position="80"/>
        <end position="89"/>
    </location>
</feature>
<feature type="strand" evidence="4">
    <location>
        <begin position="96"/>
        <end position="102"/>
    </location>
</feature>
<feature type="strand" evidence="4">
    <location>
        <begin position="108"/>
        <end position="111"/>
    </location>
</feature>
<reference key="1">
    <citation type="submission" date="2000-05" db="EMBL/GenBank/DDBJ databases">
        <authorList>
            <person name="Watson M.D."/>
            <person name="Minter R."/>
            <person name="Horton J.D."/>
        </authorList>
    </citation>
    <scope>NUCLEOTIDE SEQUENCE [MRNA]</scope>
</reference>
<organism>
    <name type="scientific">Xenopus laevis</name>
    <name type="common">African clawed frog</name>
    <dbReference type="NCBI Taxonomy" id="8355"/>
    <lineage>
        <taxon>Eukaryota</taxon>
        <taxon>Metazoa</taxon>
        <taxon>Chordata</taxon>
        <taxon>Craniata</taxon>
        <taxon>Vertebrata</taxon>
        <taxon>Euteleostomi</taxon>
        <taxon>Amphibia</taxon>
        <taxon>Batrachia</taxon>
        <taxon>Anura</taxon>
        <taxon>Pipoidea</taxon>
        <taxon>Pipidae</taxon>
        <taxon>Xenopodinae</taxon>
        <taxon>Xenopus</taxon>
        <taxon>Xenopus</taxon>
    </lineage>
</organism>